<sequence length="353" mass="38228">MNLPDRKKALEAAVAYIEKQFGAGSIMSLGRHSATHEISTIKTGALSLDLALGIHGVPKGRVIEIFGPESSGKTTLATHIVANAQKMGGVAAYIDAEHALDPSYASLIGVNIDDLMISQPDCGEDALSIAELLARSGAVDVIVIDSVAALVPKSELEGDIGDVHVGLQARMMSQALRKLTATLSRSQTCAVFINQIREKIGVSFGNPETTTGGRALKFYSSIRLDIRRIGSIKGSDNSDIGNRIKVKVAKNKLAPPFRIAEFDILFNEGISSAGCILDLAVEYNIIEKKGSWFNYQEKKLGQGREFVREELKRNRKLFEEIEKRIYDVIAANKTPSVHANETPQEVPAQTVEA</sequence>
<evidence type="ECO:0000255" key="1">
    <source>
        <dbReference type="HAMAP-Rule" id="MF_00268"/>
    </source>
</evidence>
<evidence type="ECO:0000305" key="2"/>
<gene>
    <name evidence="1" type="primary">recA</name>
    <name type="ordered locus">CPn_0762</name>
    <name type="ordered locus">CP_1110</name>
    <name type="ordered locus">CpB0790</name>
</gene>
<feature type="chain" id="PRO_0000122685" description="Protein RecA">
    <location>
        <begin position="1"/>
        <end position="353"/>
    </location>
</feature>
<feature type="binding site" evidence="1">
    <location>
        <begin position="67"/>
        <end position="74"/>
    </location>
    <ligand>
        <name>ATP</name>
        <dbReference type="ChEBI" id="CHEBI:30616"/>
    </ligand>
</feature>
<feature type="sequence conflict" description="In Ref. 4; AAP98719." evidence="2" ref="4">
    <original>E</original>
    <variation>K</variation>
    <location>
        <position position="319"/>
    </location>
</feature>
<dbReference type="EMBL" id="AE001363">
    <property type="protein sequence ID" value="AAD18900.1"/>
    <property type="molecule type" value="Genomic_DNA"/>
</dbReference>
<dbReference type="EMBL" id="AE002161">
    <property type="protein sequence ID" value="AAF38877.1"/>
    <property type="molecule type" value="Genomic_DNA"/>
</dbReference>
<dbReference type="EMBL" id="BA000008">
    <property type="protein sequence ID" value="BAA98970.1"/>
    <property type="molecule type" value="Genomic_DNA"/>
</dbReference>
<dbReference type="EMBL" id="AE009440">
    <property type="protein sequence ID" value="AAP98719.1"/>
    <property type="molecule type" value="Genomic_DNA"/>
</dbReference>
<dbReference type="PIR" id="E72037">
    <property type="entry name" value="E72037"/>
</dbReference>
<dbReference type="PIR" id="H86585">
    <property type="entry name" value="H86585"/>
</dbReference>
<dbReference type="RefSeq" id="NP_224957.1">
    <property type="nucleotide sequence ID" value="NC_000922.1"/>
</dbReference>
<dbReference type="RefSeq" id="WP_010883399.1">
    <property type="nucleotide sequence ID" value="NZ_LN847257.1"/>
</dbReference>
<dbReference type="SMR" id="Q9Z7E4"/>
<dbReference type="STRING" id="406984.CPK_ORF00168"/>
<dbReference type="GeneID" id="45050817"/>
<dbReference type="KEGG" id="cpa:CP_1110"/>
<dbReference type="KEGG" id="cpj:recA"/>
<dbReference type="KEGG" id="cpn:CPn_0762"/>
<dbReference type="KEGG" id="cpt:CpB0790"/>
<dbReference type="PATRIC" id="fig|115713.3.peg.839"/>
<dbReference type="eggNOG" id="COG0468">
    <property type="taxonomic scope" value="Bacteria"/>
</dbReference>
<dbReference type="HOGENOM" id="CLU_040469_3_2_0"/>
<dbReference type="OMA" id="DSKMGLH"/>
<dbReference type="OrthoDB" id="9776733at2"/>
<dbReference type="Proteomes" id="UP000000583">
    <property type="component" value="Chromosome"/>
</dbReference>
<dbReference type="Proteomes" id="UP000000801">
    <property type="component" value="Chromosome"/>
</dbReference>
<dbReference type="GO" id="GO:0005829">
    <property type="term" value="C:cytosol"/>
    <property type="evidence" value="ECO:0007669"/>
    <property type="project" value="TreeGrafter"/>
</dbReference>
<dbReference type="GO" id="GO:0005524">
    <property type="term" value="F:ATP binding"/>
    <property type="evidence" value="ECO:0007669"/>
    <property type="project" value="UniProtKB-UniRule"/>
</dbReference>
<dbReference type="GO" id="GO:0016887">
    <property type="term" value="F:ATP hydrolysis activity"/>
    <property type="evidence" value="ECO:0007669"/>
    <property type="project" value="InterPro"/>
</dbReference>
<dbReference type="GO" id="GO:0140664">
    <property type="term" value="F:ATP-dependent DNA damage sensor activity"/>
    <property type="evidence" value="ECO:0007669"/>
    <property type="project" value="InterPro"/>
</dbReference>
<dbReference type="GO" id="GO:0003684">
    <property type="term" value="F:damaged DNA binding"/>
    <property type="evidence" value="ECO:0007669"/>
    <property type="project" value="UniProtKB-UniRule"/>
</dbReference>
<dbReference type="GO" id="GO:0003697">
    <property type="term" value="F:single-stranded DNA binding"/>
    <property type="evidence" value="ECO:0007669"/>
    <property type="project" value="UniProtKB-UniRule"/>
</dbReference>
<dbReference type="GO" id="GO:0006310">
    <property type="term" value="P:DNA recombination"/>
    <property type="evidence" value="ECO:0007669"/>
    <property type="project" value="UniProtKB-UniRule"/>
</dbReference>
<dbReference type="GO" id="GO:0006281">
    <property type="term" value="P:DNA repair"/>
    <property type="evidence" value="ECO:0007669"/>
    <property type="project" value="UniProtKB-UniRule"/>
</dbReference>
<dbReference type="GO" id="GO:0009432">
    <property type="term" value="P:SOS response"/>
    <property type="evidence" value="ECO:0007669"/>
    <property type="project" value="UniProtKB-UniRule"/>
</dbReference>
<dbReference type="CDD" id="cd00983">
    <property type="entry name" value="RecA"/>
    <property type="match status" value="1"/>
</dbReference>
<dbReference type="FunFam" id="3.40.50.300:FF:000087">
    <property type="entry name" value="Recombinase RecA"/>
    <property type="match status" value="1"/>
</dbReference>
<dbReference type="Gene3D" id="3.40.50.300">
    <property type="entry name" value="P-loop containing nucleotide triphosphate hydrolases"/>
    <property type="match status" value="1"/>
</dbReference>
<dbReference type="HAMAP" id="MF_00268">
    <property type="entry name" value="RecA"/>
    <property type="match status" value="1"/>
</dbReference>
<dbReference type="InterPro" id="IPR003593">
    <property type="entry name" value="AAA+_ATPase"/>
</dbReference>
<dbReference type="InterPro" id="IPR013765">
    <property type="entry name" value="DNA_recomb/repair_RecA"/>
</dbReference>
<dbReference type="InterPro" id="IPR020584">
    <property type="entry name" value="DNA_recomb/repair_RecA_CS"/>
</dbReference>
<dbReference type="InterPro" id="IPR027417">
    <property type="entry name" value="P-loop_NTPase"/>
</dbReference>
<dbReference type="InterPro" id="IPR049261">
    <property type="entry name" value="RecA-like_C"/>
</dbReference>
<dbReference type="InterPro" id="IPR049428">
    <property type="entry name" value="RecA-like_N"/>
</dbReference>
<dbReference type="InterPro" id="IPR020588">
    <property type="entry name" value="RecA_ATP-bd"/>
</dbReference>
<dbReference type="InterPro" id="IPR023400">
    <property type="entry name" value="RecA_C_sf"/>
</dbReference>
<dbReference type="InterPro" id="IPR020587">
    <property type="entry name" value="RecA_monomer-monomer_interface"/>
</dbReference>
<dbReference type="NCBIfam" id="TIGR02012">
    <property type="entry name" value="tigrfam_recA"/>
    <property type="match status" value="1"/>
</dbReference>
<dbReference type="PANTHER" id="PTHR45900:SF1">
    <property type="entry name" value="MITOCHONDRIAL DNA REPAIR PROTEIN RECA HOMOLOG-RELATED"/>
    <property type="match status" value="1"/>
</dbReference>
<dbReference type="PANTHER" id="PTHR45900">
    <property type="entry name" value="RECA"/>
    <property type="match status" value="1"/>
</dbReference>
<dbReference type="Pfam" id="PF00154">
    <property type="entry name" value="RecA"/>
    <property type="match status" value="1"/>
</dbReference>
<dbReference type="Pfam" id="PF21096">
    <property type="entry name" value="RecA_C"/>
    <property type="match status" value="1"/>
</dbReference>
<dbReference type="PRINTS" id="PR00142">
    <property type="entry name" value="RECA"/>
</dbReference>
<dbReference type="SMART" id="SM00382">
    <property type="entry name" value="AAA"/>
    <property type="match status" value="1"/>
</dbReference>
<dbReference type="SUPFAM" id="SSF52540">
    <property type="entry name" value="P-loop containing nucleoside triphosphate hydrolases"/>
    <property type="match status" value="1"/>
</dbReference>
<dbReference type="SUPFAM" id="SSF54752">
    <property type="entry name" value="RecA protein, C-terminal domain"/>
    <property type="match status" value="1"/>
</dbReference>
<dbReference type="PROSITE" id="PS00321">
    <property type="entry name" value="RECA_1"/>
    <property type="match status" value="1"/>
</dbReference>
<dbReference type="PROSITE" id="PS50162">
    <property type="entry name" value="RECA_2"/>
    <property type="match status" value="1"/>
</dbReference>
<dbReference type="PROSITE" id="PS50163">
    <property type="entry name" value="RECA_3"/>
    <property type="match status" value="1"/>
</dbReference>
<organism>
    <name type="scientific">Chlamydia pneumoniae</name>
    <name type="common">Chlamydophila pneumoniae</name>
    <dbReference type="NCBI Taxonomy" id="83558"/>
    <lineage>
        <taxon>Bacteria</taxon>
        <taxon>Pseudomonadati</taxon>
        <taxon>Chlamydiota</taxon>
        <taxon>Chlamydiia</taxon>
        <taxon>Chlamydiales</taxon>
        <taxon>Chlamydiaceae</taxon>
        <taxon>Chlamydia/Chlamydophila group</taxon>
        <taxon>Chlamydia</taxon>
    </lineage>
</organism>
<proteinExistence type="inferred from homology"/>
<accession>Q9Z7E4</accession>
<accession>Q9JQ98</accession>
<name>RECA_CHLPN</name>
<reference key="1">
    <citation type="journal article" date="1999" name="Nat. Genet.">
        <title>Comparative genomes of Chlamydia pneumoniae and C. trachomatis.</title>
        <authorList>
            <person name="Kalman S."/>
            <person name="Mitchell W.P."/>
            <person name="Marathe R."/>
            <person name="Lammel C.J."/>
            <person name="Fan J."/>
            <person name="Hyman R.W."/>
            <person name="Olinger L."/>
            <person name="Grimwood J."/>
            <person name="Davis R.W."/>
            <person name="Stephens R.S."/>
        </authorList>
    </citation>
    <scope>NUCLEOTIDE SEQUENCE [LARGE SCALE GENOMIC DNA]</scope>
    <source>
        <strain>CWL029</strain>
    </source>
</reference>
<reference key="2">
    <citation type="journal article" date="2000" name="Nucleic Acids Res.">
        <title>Genome sequences of Chlamydia trachomatis MoPn and Chlamydia pneumoniae AR39.</title>
        <authorList>
            <person name="Read T.D."/>
            <person name="Brunham R.C."/>
            <person name="Shen C."/>
            <person name="Gill S.R."/>
            <person name="Heidelberg J.F."/>
            <person name="White O."/>
            <person name="Hickey E.K."/>
            <person name="Peterson J.D."/>
            <person name="Utterback T.R."/>
            <person name="Berry K.J."/>
            <person name="Bass S."/>
            <person name="Linher K.D."/>
            <person name="Weidman J.F."/>
            <person name="Khouri H.M."/>
            <person name="Craven B."/>
            <person name="Bowman C."/>
            <person name="Dodson R.J."/>
            <person name="Gwinn M.L."/>
            <person name="Nelson W.C."/>
            <person name="DeBoy R.T."/>
            <person name="Kolonay J.F."/>
            <person name="McClarty G."/>
            <person name="Salzberg S.L."/>
            <person name="Eisen J.A."/>
            <person name="Fraser C.M."/>
        </authorList>
    </citation>
    <scope>NUCLEOTIDE SEQUENCE [LARGE SCALE GENOMIC DNA]</scope>
    <source>
        <strain>AR39</strain>
    </source>
</reference>
<reference key="3">
    <citation type="journal article" date="2000" name="Nucleic Acids Res.">
        <title>Comparison of whole genome sequences of Chlamydia pneumoniae J138 from Japan and CWL029 from USA.</title>
        <authorList>
            <person name="Shirai M."/>
            <person name="Hirakawa H."/>
            <person name="Kimoto M."/>
            <person name="Tabuchi M."/>
            <person name="Kishi F."/>
            <person name="Ouchi K."/>
            <person name="Shiba T."/>
            <person name="Ishii K."/>
            <person name="Hattori M."/>
            <person name="Kuhara S."/>
            <person name="Nakazawa T."/>
        </authorList>
    </citation>
    <scope>NUCLEOTIDE SEQUENCE [LARGE SCALE GENOMIC DNA]</scope>
    <source>
        <strain>J138</strain>
    </source>
</reference>
<reference key="4">
    <citation type="submission" date="2002-05" db="EMBL/GenBank/DDBJ databases">
        <title>The genome sequence of Chlamydia pneumoniae TW183 and comparison with other Chlamydia strains based on whole genome sequence analysis.</title>
        <authorList>
            <person name="Geng M.M."/>
            <person name="Schuhmacher A."/>
            <person name="Muehldorfer I."/>
            <person name="Bensch K.W."/>
            <person name="Schaefer K.P."/>
            <person name="Schneider S."/>
            <person name="Pohl T."/>
            <person name="Essig A."/>
            <person name="Marre R."/>
            <person name="Melchers K."/>
        </authorList>
    </citation>
    <scope>NUCLEOTIDE SEQUENCE [LARGE SCALE GENOMIC DNA]</scope>
    <source>
        <strain>TW-183</strain>
    </source>
</reference>
<keyword id="KW-0067">ATP-binding</keyword>
<keyword id="KW-0963">Cytoplasm</keyword>
<keyword id="KW-0227">DNA damage</keyword>
<keyword id="KW-0233">DNA recombination</keyword>
<keyword id="KW-0234">DNA repair</keyword>
<keyword id="KW-0238">DNA-binding</keyword>
<keyword id="KW-0547">Nucleotide-binding</keyword>
<keyword id="KW-0742">SOS response</keyword>
<comment type="function">
    <text evidence="1">Can catalyze the hydrolysis of ATP in the presence of single-stranded DNA, the ATP-dependent uptake of single-stranded DNA by duplex DNA, and the ATP-dependent hybridization of homologous single-stranded DNAs. It interacts with LexA causing its activation and leading to its autocatalytic cleavage.</text>
</comment>
<comment type="subcellular location">
    <subcellularLocation>
        <location evidence="1">Cytoplasm</location>
    </subcellularLocation>
</comment>
<comment type="similarity">
    <text evidence="1">Belongs to the RecA family.</text>
</comment>
<protein>
    <recommendedName>
        <fullName evidence="1">Protein RecA</fullName>
    </recommendedName>
    <alternativeName>
        <fullName evidence="1">Recombinase A</fullName>
    </alternativeName>
</protein>